<keyword id="KW-0002">3D-structure</keyword>
<keyword id="KW-1003">Cell membrane</keyword>
<keyword id="KW-0297">G-protein coupled receptor</keyword>
<keyword id="KW-0325">Glycoprotein</keyword>
<keyword id="KW-0472">Membrane</keyword>
<keyword id="KW-1267">Proteomics identification</keyword>
<keyword id="KW-0675">Receptor</keyword>
<keyword id="KW-1185">Reference proteome</keyword>
<keyword id="KW-0807">Transducer</keyword>
<keyword id="KW-0812">Transmembrane</keyword>
<keyword id="KW-1133">Transmembrane helix</keyword>
<feature type="chain" id="PRO_0000069577" description="G-protein coupled receptor 55">
    <location>
        <begin position="1"/>
        <end position="319"/>
    </location>
</feature>
<feature type="topological domain" description="Extracellular" evidence="1">
    <location>
        <begin position="1"/>
        <end position="21"/>
    </location>
</feature>
<feature type="transmembrane region" description="Helical; Name=1" evidence="1">
    <location>
        <begin position="22"/>
        <end position="42"/>
    </location>
</feature>
<feature type="topological domain" description="Cytoplasmic" evidence="1">
    <location>
        <begin position="43"/>
        <end position="58"/>
    </location>
</feature>
<feature type="transmembrane region" description="Helical; Name=2" evidence="1">
    <location>
        <begin position="59"/>
        <end position="79"/>
    </location>
</feature>
<feature type="topological domain" description="Extracellular" evidence="1">
    <location>
        <begin position="80"/>
        <end position="94"/>
    </location>
</feature>
<feature type="transmembrane region" description="Helical; Name=3" evidence="1">
    <location>
        <begin position="95"/>
        <end position="115"/>
    </location>
</feature>
<feature type="topological domain" description="Cytoplasmic" evidence="1">
    <location>
        <begin position="116"/>
        <end position="137"/>
    </location>
</feature>
<feature type="transmembrane region" description="Helical; Name=4" evidence="1">
    <location>
        <begin position="138"/>
        <end position="158"/>
    </location>
</feature>
<feature type="topological domain" description="Extracellular" evidence="1">
    <location>
        <begin position="159"/>
        <end position="180"/>
    </location>
</feature>
<feature type="transmembrane region" description="Helical; Name=5" evidence="1">
    <location>
        <begin position="181"/>
        <end position="201"/>
    </location>
</feature>
<feature type="topological domain" description="Cytoplasmic" evidence="1">
    <location>
        <begin position="202"/>
        <end position="231"/>
    </location>
</feature>
<feature type="transmembrane region" description="Helical; Name=6" evidence="1">
    <location>
        <begin position="232"/>
        <end position="252"/>
    </location>
</feature>
<feature type="topological domain" description="Extracellular" evidence="1">
    <location>
        <begin position="253"/>
        <end position="271"/>
    </location>
</feature>
<feature type="transmembrane region" description="Helical; Name=7" evidence="1">
    <location>
        <begin position="272"/>
        <end position="292"/>
    </location>
</feature>
<feature type="topological domain" description="Cytoplasmic" evidence="1">
    <location>
        <begin position="293"/>
        <end position="319"/>
    </location>
</feature>
<feature type="glycosylation site" description="N-linked (GlcNAc...) asparagine" evidence="1">
    <location>
        <position position="5"/>
    </location>
</feature>
<feature type="glycosylation site" description="N-linked (GlcNAc...) asparagine" evidence="1">
    <location>
        <position position="171"/>
    </location>
</feature>
<feature type="sequence variant" id="VAR_024257" description="In dbSNP:rs3749073.">
    <original>G</original>
    <variation>V</variation>
    <location>
        <position position="195"/>
    </location>
</feature>
<feature type="sequence variant" id="VAR_049395" description="In dbSNP:rs34229723.">
    <original>T</original>
    <variation>N</variation>
    <location>
        <position position="215"/>
    </location>
</feature>
<dbReference type="EMBL" id="AF096786">
    <property type="protein sequence ID" value="AAD22410.1"/>
    <property type="status" value="ALT_FRAME"/>
    <property type="molecule type" value="Genomic_DNA"/>
</dbReference>
<dbReference type="EMBL" id="CR541776">
    <property type="protein sequence ID" value="CAG46575.1"/>
    <property type="molecule type" value="mRNA"/>
</dbReference>
<dbReference type="EMBL" id="BC032694">
    <property type="protein sequence ID" value="AAH32694.1"/>
    <property type="molecule type" value="mRNA"/>
</dbReference>
<dbReference type="CCDS" id="CCDS2480.1"/>
<dbReference type="RefSeq" id="NP_005674.2">
    <property type="nucleotide sequence ID" value="NM_005683.3"/>
</dbReference>
<dbReference type="RefSeq" id="XP_005247009.1">
    <property type="nucleotide sequence ID" value="XM_005246952.5"/>
</dbReference>
<dbReference type="RefSeq" id="XP_011510477.1">
    <property type="nucleotide sequence ID" value="XM_011512175.4"/>
</dbReference>
<dbReference type="RefSeq" id="XP_011510478.1">
    <property type="nucleotide sequence ID" value="XM_011512176.3"/>
</dbReference>
<dbReference type="RefSeq" id="XP_054200542.1">
    <property type="nucleotide sequence ID" value="XM_054344567.1"/>
</dbReference>
<dbReference type="RefSeq" id="XP_054200543.1">
    <property type="nucleotide sequence ID" value="XM_054344568.1"/>
</dbReference>
<dbReference type="RefSeq" id="XP_054200544.1">
    <property type="nucleotide sequence ID" value="XM_054344569.1"/>
</dbReference>
<dbReference type="PDB" id="8ZX4">
    <property type="method" value="EM"/>
    <property type="resolution" value="2.85 A"/>
    <property type="chains" value="R=1-297"/>
</dbReference>
<dbReference type="PDB" id="8ZX5">
    <property type="method" value="EM"/>
    <property type="resolution" value="3.03 A"/>
    <property type="chains" value="R=1-319"/>
</dbReference>
<dbReference type="PDB" id="9GE2">
    <property type="method" value="EM"/>
    <property type="resolution" value="2.51 A"/>
    <property type="chains" value="R=1-319"/>
</dbReference>
<dbReference type="PDB" id="9GE3">
    <property type="method" value="EM"/>
    <property type="resolution" value="2.87 A"/>
    <property type="chains" value="R=1-319"/>
</dbReference>
<dbReference type="PDB" id="9IY8">
    <property type="method" value="EM"/>
    <property type="resolution" value="3.01 A"/>
    <property type="chains" value="R=2-319"/>
</dbReference>
<dbReference type="PDB" id="9IYA">
    <property type="method" value="EM"/>
    <property type="resolution" value="3.04 A"/>
    <property type="chains" value="A=7-296"/>
</dbReference>
<dbReference type="PDBsum" id="8ZX4"/>
<dbReference type="PDBsum" id="8ZX5"/>
<dbReference type="PDBsum" id="9GE2"/>
<dbReference type="PDBsum" id="9GE3"/>
<dbReference type="PDBsum" id="9IY8"/>
<dbReference type="PDBsum" id="9IYA"/>
<dbReference type="EMDB" id="EMD-51284"/>
<dbReference type="EMDB" id="EMD-51288"/>
<dbReference type="EMDB" id="EMD-60537"/>
<dbReference type="EMDB" id="EMD-60538"/>
<dbReference type="EMDB" id="EMD-60990"/>
<dbReference type="SMR" id="Q9Y2T6"/>
<dbReference type="BioGRID" id="114705">
    <property type="interactions" value="88"/>
</dbReference>
<dbReference type="CORUM" id="Q9Y2T6"/>
<dbReference type="FunCoup" id="Q9Y2T6">
    <property type="interactions" value="771"/>
</dbReference>
<dbReference type="IntAct" id="Q9Y2T6">
    <property type="interactions" value="66"/>
</dbReference>
<dbReference type="STRING" id="9606.ENSP00000498258"/>
<dbReference type="BindingDB" id="Q9Y2T6"/>
<dbReference type="ChEMBL" id="CHEMBL1075322"/>
<dbReference type="DrugBank" id="DB09061">
    <property type="generic name" value="Cannabidiol"/>
</dbReference>
<dbReference type="DrugBank" id="DB14009">
    <property type="generic name" value="Medical Cannabis"/>
</dbReference>
<dbReference type="DrugBank" id="DB14011">
    <property type="generic name" value="Nabiximols"/>
</dbReference>
<dbReference type="DrugBank" id="DB16495">
    <property type="generic name" value="Oleic monoethanolamide"/>
</dbReference>
<dbReference type="DrugBank" id="DB14043">
    <property type="generic name" value="Palmidrol"/>
</dbReference>
<dbReference type="DrugBank" id="DB06155">
    <property type="generic name" value="Rimonabant"/>
</dbReference>
<dbReference type="DrugBank" id="DB11755">
    <property type="generic name" value="Tetrahydrocannabivarin"/>
</dbReference>
<dbReference type="DrugCentral" id="Q9Y2T6"/>
<dbReference type="GuidetoPHARMACOLOGY" id="109"/>
<dbReference type="GlyCosmos" id="Q9Y2T6">
    <property type="glycosylation" value="2 sites, No reported glycans"/>
</dbReference>
<dbReference type="GlyGen" id="Q9Y2T6">
    <property type="glycosylation" value="2 sites"/>
</dbReference>
<dbReference type="PhosphoSitePlus" id="Q9Y2T6"/>
<dbReference type="BioMuta" id="GPR55"/>
<dbReference type="DMDM" id="71159390"/>
<dbReference type="jPOST" id="Q9Y2T6"/>
<dbReference type="MassIVE" id="Q9Y2T6"/>
<dbReference type="PaxDb" id="9606-ENSP00000375894"/>
<dbReference type="PeptideAtlas" id="Q9Y2T6"/>
<dbReference type="ProteomicsDB" id="85898"/>
<dbReference type="Antibodypedia" id="20197">
    <property type="antibodies" value="167 antibodies from 26 providers"/>
</dbReference>
<dbReference type="DNASU" id="9290"/>
<dbReference type="Ensembl" id="ENST00000392039.2">
    <property type="protein sequence ID" value="ENSP00000375893.2"/>
    <property type="gene ID" value="ENSG00000135898.10"/>
</dbReference>
<dbReference type="Ensembl" id="ENST00000392040.5">
    <property type="protein sequence ID" value="ENSP00000375894.1"/>
    <property type="gene ID" value="ENSG00000135898.10"/>
</dbReference>
<dbReference type="Ensembl" id="ENST00000444078.5">
    <property type="protein sequence ID" value="ENSP00000410267.1"/>
    <property type="gene ID" value="ENSG00000135898.10"/>
</dbReference>
<dbReference type="Ensembl" id="ENST00000622008.4">
    <property type="protein sequence ID" value="ENSP00000482381.1"/>
    <property type="gene ID" value="ENSG00000135898.10"/>
</dbReference>
<dbReference type="Ensembl" id="ENST00000650999.1">
    <property type="protein sequence ID" value="ENSP00000498258.1"/>
    <property type="gene ID" value="ENSG00000135898.10"/>
</dbReference>
<dbReference type="GeneID" id="9290"/>
<dbReference type="KEGG" id="hsa:9290"/>
<dbReference type="MANE-Select" id="ENST00000650999.1">
    <property type="protein sequence ID" value="ENSP00000498258.1"/>
    <property type="RefSeq nucleotide sequence ID" value="NM_005683.4"/>
    <property type="RefSeq protein sequence ID" value="NP_005674.2"/>
</dbReference>
<dbReference type="UCSC" id="uc002vrf.4">
    <property type="organism name" value="human"/>
</dbReference>
<dbReference type="AGR" id="HGNC:4511"/>
<dbReference type="CTD" id="9290"/>
<dbReference type="DisGeNET" id="9290"/>
<dbReference type="GeneCards" id="GPR55"/>
<dbReference type="HGNC" id="HGNC:4511">
    <property type="gene designation" value="GPR55"/>
</dbReference>
<dbReference type="HPA" id="ENSG00000135898">
    <property type="expression patterns" value="Tissue enhanced (brain, lymphoid tissue, testis)"/>
</dbReference>
<dbReference type="MalaCards" id="GPR55"/>
<dbReference type="MIM" id="604107">
    <property type="type" value="gene"/>
</dbReference>
<dbReference type="neXtProt" id="NX_Q9Y2T6"/>
<dbReference type="OpenTargets" id="ENSG00000135898"/>
<dbReference type="PharmGKB" id="PA28900"/>
<dbReference type="VEuPathDB" id="HostDB:ENSG00000135898"/>
<dbReference type="eggNOG" id="ENOG502QWNM">
    <property type="taxonomic scope" value="Eukaryota"/>
</dbReference>
<dbReference type="GeneTree" id="ENSGT01040000240444"/>
<dbReference type="InParanoid" id="Q9Y2T6"/>
<dbReference type="OMA" id="TCFHNMS"/>
<dbReference type="OrthoDB" id="9447539at2759"/>
<dbReference type="PAN-GO" id="Q9Y2T6">
    <property type="GO annotations" value="5 GO annotations based on evolutionary models"/>
</dbReference>
<dbReference type="PhylomeDB" id="Q9Y2T6"/>
<dbReference type="TreeFam" id="TF335700"/>
<dbReference type="PathwayCommons" id="Q9Y2T6"/>
<dbReference type="Reactome" id="R-HSA-373076">
    <property type="pathway name" value="Class A/1 (Rhodopsin-like receptors)"/>
</dbReference>
<dbReference type="Reactome" id="R-HSA-418594">
    <property type="pathway name" value="G alpha (i) signalling events"/>
</dbReference>
<dbReference type="SignaLink" id="Q9Y2T6"/>
<dbReference type="SIGNOR" id="Q9Y2T6"/>
<dbReference type="BioGRID-ORCS" id="9290">
    <property type="hits" value="9 hits in 1139 CRISPR screens"/>
</dbReference>
<dbReference type="ChiTaRS" id="GPR55">
    <property type="organism name" value="human"/>
</dbReference>
<dbReference type="GeneWiki" id="GPR55"/>
<dbReference type="GenomeRNAi" id="9290"/>
<dbReference type="Pharos" id="Q9Y2T6">
    <property type="development level" value="Tclin"/>
</dbReference>
<dbReference type="PRO" id="PR:Q9Y2T6"/>
<dbReference type="Proteomes" id="UP000005640">
    <property type="component" value="Chromosome 2"/>
</dbReference>
<dbReference type="RNAct" id="Q9Y2T6">
    <property type="molecule type" value="protein"/>
</dbReference>
<dbReference type="Bgee" id="ENSG00000135898">
    <property type="expression patterns" value="Expressed in monocyte and 86 other cell types or tissues"/>
</dbReference>
<dbReference type="ExpressionAtlas" id="Q9Y2T6">
    <property type="expression patterns" value="baseline and differential"/>
</dbReference>
<dbReference type="GO" id="GO:0005886">
    <property type="term" value="C:plasma membrane"/>
    <property type="evidence" value="ECO:0000314"/>
    <property type="project" value="UniProtKB"/>
</dbReference>
<dbReference type="GO" id="GO:0004949">
    <property type="term" value="F:cannabinoid receptor activity"/>
    <property type="evidence" value="ECO:0000314"/>
    <property type="project" value="UniProtKB"/>
</dbReference>
<dbReference type="GO" id="GO:0004930">
    <property type="term" value="F:G protein-coupled receptor activity"/>
    <property type="evidence" value="ECO:0000304"/>
    <property type="project" value="ProtInc"/>
</dbReference>
<dbReference type="GO" id="GO:0045453">
    <property type="term" value="P:bone resorption"/>
    <property type="evidence" value="ECO:0000314"/>
    <property type="project" value="UniProtKB"/>
</dbReference>
<dbReference type="GO" id="GO:0007186">
    <property type="term" value="P:G protein-coupled receptor signaling pathway"/>
    <property type="evidence" value="ECO:0000318"/>
    <property type="project" value="GO_Central"/>
</dbReference>
<dbReference type="GO" id="GO:0045671">
    <property type="term" value="P:negative regulation of osteoclast differentiation"/>
    <property type="evidence" value="ECO:0000314"/>
    <property type="project" value="UniProtKB"/>
</dbReference>
<dbReference type="GO" id="GO:0007200">
    <property type="term" value="P:phospholipase C-activating G protein-coupled receptor signaling pathway"/>
    <property type="evidence" value="ECO:0000314"/>
    <property type="project" value="UniProtKB"/>
</dbReference>
<dbReference type="GO" id="GO:0070374">
    <property type="term" value="P:positive regulation of ERK1 and ERK2 cascade"/>
    <property type="evidence" value="ECO:0000314"/>
    <property type="project" value="UniProtKB"/>
</dbReference>
<dbReference type="GO" id="GO:0035025">
    <property type="term" value="P:positive regulation of Rho protein signal transduction"/>
    <property type="evidence" value="ECO:0000314"/>
    <property type="project" value="UniProtKB"/>
</dbReference>
<dbReference type="CDD" id="cd15165">
    <property type="entry name" value="7tmA_GPR55-like"/>
    <property type="match status" value="1"/>
</dbReference>
<dbReference type="FunFam" id="1.20.1070.10:FF:000142">
    <property type="entry name" value="G protein-coupled receptor 55"/>
    <property type="match status" value="1"/>
</dbReference>
<dbReference type="Gene3D" id="1.20.1070.10">
    <property type="entry name" value="Rhodopsin 7-helix transmembrane proteins"/>
    <property type="match status" value="1"/>
</dbReference>
<dbReference type="InterPro" id="IPR000276">
    <property type="entry name" value="GPCR_Rhodpsn"/>
</dbReference>
<dbReference type="InterPro" id="IPR017452">
    <property type="entry name" value="GPCR_Rhodpsn_7TM"/>
</dbReference>
<dbReference type="PANTHER" id="PTHR24232">
    <property type="entry name" value="G-PROTEIN COUPLED RECEPTOR"/>
    <property type="match status" value="1"/>
</dbReference>
<dbReference type="PANTHER" id="PTHR24232:SF56">
    <property type="entry name" value="G-PROTEIN COUPLED RECEPTOR 55"/>
    <property type="match status" value="1"/>
</dbReference>
<dbReference type="Pfam" id="PF00001">
    <property type="entry name" value="7tm_1"/>
    <property type="match status" value="1"/>
</dbReference>
<dbReference type="PRINTS" id="PR00237">
    <property type="entry name" value="GPCRRHODOPSN"/>
</dbReference>
<dbReference type="SUPFAM" id="SSF81321">
    <property type="entry name" value="Family A G protein-coupled receptor-like"/>
    <property type="match status" value="1"/>
</dbReference>
<dbReference type="PROSITE" id="PS00237">
    <property type="entry name" value="G_PROTEIN_RECEP_F1_1"/>
    <property type="match status" value="1"/>
</dbReference>
<dbReference type="PROSITE" id="PS50262">
    <property type="entry name" value="G_PROTEIN_RECEP_F1_2"/>
    <property type="match status" value="1"/>
</dbReference>
<reference key="1">
    <citation type="journal article" date="1999" name="Brain Res. Mol. Brain Res.">
        <title>Identification and cloning of three novel human G protein-coupled receptor genes GPR52, PsiGPR53 and GPR55: GPR55 is extensively expressed in human brain.</title>
        <authorList>
            <person name="Sawzdargo M."/>
            <person name="Nguyen T."/>
            <person name="Lee D.K."/>
            <person name="Lynch K.R."/>
            <person name="Cheng R."/>
            <person name="Heng H.H.Q."/>
            <person name="George S.R."/>
            <person name="O'Dowd B.F."/>
        </authorList>
    </citation>
    <scope>NUCLEOTIDE SEQUENCE [MRNA]</scope>
    <scope>TISSUE SPECIFICITY</scope>
</reference>
<reference key="2">
    <citation type="submission" date="2004-06" db="EMBL/GenBank/DDBJ databases">
        <title>Cloning of human full open reading frames in Gateway(TM) system entry vector (pDONR201).</title>
        <authorList>
            <person name="Ebert L."/>
            <person name="Schick M."/>
            <person name="Neubert P."/>
            <person name="Schatten R."/>
            <person name="Henze S."/>
            <person name="Korn B."/>
        </authorList>
    </citation>
    <scope>NUCLEOTIDE SEQUENCE [LARGE SCALE MRNA]</scope>
</reference>
<reference key="3">
    <citation type="journal article" date="2004" name="Genome Res.">
        <title>The status, quality, and expansion of the NIH full-length cDNA project: the Mammalian Gene Collection (MGC).</title>
        <authorList>
            <consortium name="The MGC Project Team"/>
        </authorList>
    </citation>
    <scope>NUCLEOTIDE SEQUENCE [LARGE SCALE MRNA]</scope>
    <source>
        <tissue>Pancreas</tissue>
    </source>
</reference>
<reference key="4">
    <citation type="journal article" date="2007" name="Biochem. Biophys. Res. Commun.">
        <title>Identification of GPR55 as a lysophosphatidylinositol receptor.</title>
        <authorList>
            <person name="Oka S."/>
            <person name="Nakajima K."/>
            <person name="Yamashita A."/>
            <person name="Kishimoto S."/>
            <person name="Sugiura T."/>
        </authorList>
    </citation>
    <scope>LIGAND-BINDING</scope>
</reference>
<reference key="5">
    <citation type="journal article" date="2009" name="FASEB J.">
        <title>The GPR55 ligand L-alpha-lysophosphatidylinositol promotes RhoA-dependent Ca2+ signaling and NFAT activation.</title>
        <authorList>
            <person name="Henstridge C.M."/>
            <person name="Balenga N.A."/>
            <person name="Ford L.A."/>
            <person name="Ross R.A."/>
            <person name="Waldhoer M."/>
            <person name="Irving A.J."/>
        </authorList>
    </citation>
    <scope>SUBCELLULAR LOCATION</scope>
    <scope>CHARACTERIZATION</scope>
    <scope>LIGAND-BINDING</scope>
</reference>
<reference key="6">
    <citation type="journal article" date="2009" name="J. Biol. Chem.">
        <title>Atypical responsiveness of the orphan receptor GPR55 to cannabinoid ligands.</title>
        <authorList>
            <person name="Kapur A."/>
            <person name="Zhao P."/>
            <person name="Sharir H."/>
            <person name="Bai Y."/>
            <person name="Caron M.G."/>
            <person name="Barak L.S."/>
            <person name="Abood M.E."/>
        </authorList>
    </citation>
    <scope>LIGAND-BINDING</scope>
</reference>
<reference key="7">
    <citation type="journal article" date="2009" name="Proc. Natl. Acad. Sci. U.S.A.">
        <title>The putative cannabinoid receptor GPR55 affects osteoclast function in vitro and bone mass in vivo.</title>
        <authorList>
            <person name="Whyte L.S."/>
            <person name="Ryberg E."/>
            <person name="Sims N.A."/>
            <person name="Ridge S.A."/>
            <person name="Mackie K."/>
            <person name="Greasley P.J."/>
            <person name="Ross R.A."/>
            <person name="Rogers M.J."/>
        </authorList>
    </citation>
    <scope>TISSUE SPECIFICITY</scope>
    <scope>FUNCTION</scope>
</reference>
<reference key="8">
    <citation type="journal article" date="2022" name="Int. J. Mol. Sci.">
        <title>Lysophosphatidylinositol Induced Morphological Changes and Stress Fiber Formation through the GPR55-RhoA-ROCK Pathway.</title>
        <authorList>
            <person name="Nakajima K."/>
            <person name="Oka S."/>
            <person name="Tanikawa T."/>
            <person name="Nemoto-Sasaki Y."/>
            <person name="Matsumoto N."/>
            <person name="Ishiguro H."/>
            <person name="Arata Y."/>
            <person name="Sugiura T."/>
            <person name="Yamashita A."/>
        </authorList>
    </citation>
    <scope>FUNCTION</scope>
</reference>
<reference key="9">
    <citation type="journal article" date="2022" name="Nat. Cardiovasc. Res.">
        <title>GPR55 in B cells limits atherosclerosis development and regulates plasma cell maturation.</title>
        <authorList>
            <person name="Guillamat-Prats R."/>
            <person name="Hering D."/>
            <person name="Derle A."/>
            <person name="Rami M."/>
            <person name="Haerdtner C."/>
            <person name="Santovito D."/>
            <person name="Rinne P."/>
            <person name="Bindila L."/>
            <person name="Hristov M."/>
            <person name="Pagano S."/>
            <person name="Vuilleumier N."/>
            <person name="Schmid S."/>
            <person name="Janjic A."/>
            <person name="Enard W."/>
            <person name="Weber C."/>
            <person name="Maegdefessel L."/>
            <person name="Faussner A."/>
            <person name="Hilgendorf I."/>
            <person name="Steffens S."/>
        </authorList>
    </citation>
    <scope>FUNCTION</scope>
    <scope>TISSUE SPECIFICITY</scope>
</reference>
<reference key="10">
    <citation type="journal article" date="2023" name="Sci. Rep.">
        <title>Lysophosphatidylglucoside/GPR55 signaling promotes foam cell formation in human M2c macrophages.</title>
        <authorList>
            <person name="Shimai R."/>
            <person name="Hanafusa K."/>
            <person name="Nakayama H."/>
            <person name="Oshima E."/>
            <person name="Kato M."/>
            <person name="Kano K."/>
            <person name="Matsuo I."/>
            <person name="Miyazaki T."/>
            <person name="Tokano T."/>
            <person name="Hirabayashi Y."/>
            <person name="Iwabuchi K."/>
            <person name="Minamino T."/>
        </authorList>
    </citation>
    <scope>FUNCTION</scope>
    <scope>TISSUE SPECIFICITY</scope>
</reference>
<protein>
    <recommendedName>
        <fullName>G-protein coupled receptor 55</fullName>
    </recommendedName>
</protein>
<sequence>MSQQNTSGDCLFDGVNELMKTLQFAVHIPTFVLGLLLNLLAIHGFSTFLKNRWPDYAATSIYMINLAVFDLLLVLSLPFKMVLSQVQSPFPSLCTLVECLYFVSMYGSVFTICFISMDRFLAIRYPLLVSHLRSPRKIFGICCTIWVLVWTGSIPIYSFHGKVEKYMCFHNMSDDTWSAKVFFPLEVFGFLLPMGIMGFCCSRSIHILLGRRDHTQDWVQQKACIYSIAASLAVFVVSFLPVHLGFFLQFLVRNSFIVECRAKQSISFFLQLSMCFSNVNCCLDVFCYYFVIKEFRMNIRAHRPSRVQLVLQDTTISRG</sequence>
<gene>
    <name type="primary">GPR55</name>
</gene>
<name>GPR55_HUMAN</name>
<comment type="function">
    <text evidence="4 5 6 7">G-protein coupled receptor that binds to several ligands including 2-arachidonoyl lysophosphatidylinositol or lysophosphatidylglucoside with high affinity, leading to rapid and transient activation of numerous intracellular signaling pathways (PubMed:36142844, PubMed:36523570, PubMed:37544935). Induces the Ca(2+) release from intracellular stores via ERK, the heterotrimeric G protein GNA13 and RHOA leading to morphological changes including cell rounding and stress fiber formation (PubMed:36142844). In macrophages, acts downstream of lysophosphatidylglucoside to inhibit the translocation of the phospholipid-transporting ABCA1 to plasma membrane and subsequent cholesterol efflux leading to lipid accumulation and foam cell formation (PubMed:37544935).</text>
</comment>
<comment type="subcellular location">
    <subcellularLocation>
        <location evidence="3">Cell membrane</location>
        <topology evidence="3">Multi-pass membrane protein</topology>
    </subcellularLocation>
</comment>
<comment type="tissue specificity">
    <text evidence="4 6 7 8">Expressed in the caudate nucleus and putamen, but not detected in the hippocampus, thalamus, pons cerebellum, frontal cortex of the brain or in the liver. Expressed in osteoclasts and osteoblasts. Higly expressed in macrophages and B-cells (PubMed:36523570, PubMed:37544935).</text>
</comment>
<comment type="miscellaneous">
    <text>The classification of this protein as a cannabinoid receptor remains a contentious issue due to conflicting pharmacological results.</text>
</comment>
<comment type="similarity">
    <text evidence="2">Belongs to the G-protein coupled receptor 1 family.</text>
</comment>
<comment type="sequence caution" evidence="9">
    <conflict type="frameshift">
        <sequence resource="EMBL-CDS" id="AAD22410"/>
    </conflict>
</comment>
<accession>Q9Y2T6</accession>
<accession>Q8N580</accession>
<organism>
    <name type="scientific">Homo sapiens</name>
    <name type="common">Human</name>
    <dbReference type="NCBI Taxonomy" id="9606"/>
    <lineage>
        <taxon>Eukaryota</taxon>
        <taxon>Metazoa</taxon>
        <taxon>Chordata</taxon>
        <taxon>Craniata</taxon>
        <taxon>Vertebrata</taxon>
        <taxon>Euteleostomi</taxon>
        <taxon>Mammalia</taxon>
        <taxon>Eutheria</taxon>
        <taxon>Euarchontoglires</taxon>
        <taxon>Primates</taxon>
        <taxon>Haplorrhini</taxon>
        <taxon>Catarrhini</taxon>
        <taxon>Hominidae</taxon>
        <taxon>Homo</taxon>
    </lineage>
</organism>
<proteinExistence type="evidence at protein level"/>
<evidence type="ECO:0000255" key="1"/>
<evidence type="ECO:0000255" key="2">
    <source>
        <dbReference type="PROSITE-ProRule" id="PRU00521"/>
    </source>
</evidence>
<evidence type="ECO:0000269" key="3">
    <source>
    </source>
</evidence>
<evidence type="ECO:0000269" key="4">
    <source>
    </source>
</evidence>
<evidence type="ECO:0000269" key="5">
    <source>
    </source>
</evidence>
<evidence type="ECO:0000269" key="6">
    <source>
    </source>
</evidence>
<evidence type="ECO:0000269" key="7">
    <source>
    </source>
</evidence>
<evidence type="ECO:0000269" key="8">
    <source>
    </source>
</evidence>
<evidence type="ECO:0000305" key="9"/>